<proteinExistence type="inferred from homology"/>
<gene>
    <name evidence="1" type="primary">ligA</name>
    <name type="ordered locus">Asuc_2067</name>
</gene>
<sequence>MTDIQNQINQLRNTLRHHEYQYHVLDNPEIPDSEYDRLFHRLKALEQQHPELISADSPTQRVGAKPLAGFAQITHELPMLSLDNVFSDEEFYAFVKRIQERLITLPDNLEFCCEPKLDGLAVSILYENGRLVQAATRGDGTTGEDITLNIRTIRNIPLQLLTDNPPVRLEVRGEVFMPQEGFDRLNEAALARGEKTFANPRNAAAGSLRQLDPKITSQRPLVWNAYSIGIAEGADLPPTHYERLQWLKSIGIPVNGEIRLCRGAENVLKFYRTIQEKRPELGYDIDGTVLKVNEIALQERLGFISKAPRWAIAYKFPAQEEMTVLNDVEFQVGRTGAITPVAKLQPVFVAGVTVSNATLHNGDEIARLDIAIGDTVIVRRAGDVIPQIIGVVHDRRPPNAEPIIFPTLCPVCHSAIVRIEGEAVARCTGGLFCDAQRKESLKHFVSRRAMDIDGVGAKLIEQLVDRELIRTPADLFKLDLITLMRLERMGEKSAQKALDSLEKAKKTTLARFIFALGIREVGEATALNLANFFKNLTALQTADLEQLQAVSDVGEVVANRIYVFWREQHNIDVVNDLIAQGVHWDDVEEKQVNENPFKEKTVVLTGTLSQMGRNEAKALLQQMGAKVAGSVSAKTHIVIAGDSAGSKLSKAQDLGVAVMSEAEFLEIVNSFS</sequence>
<feature type="chain" id="PRO_0000340323" description="DNA ligase">
    <location>
        <begin position="1"/>
        <end position="672"/>
    </location>
</feature>
<feature type="domain" description="BRCT" evidence="1">
    <location>
        <begin position="592"/>
        <end position="672"/>
    </location>
</feature>
<feature type="active site" description="N6-AMP-lysine intermediate" evidence="1">
    <location>
        <position position="116"/>
    </location>
</feature>
<feature type="binding site" evidence="1">
    <location>
        <begin position="32"/>
        <end position="36"/>
    </location>
    <ligand>
        <name>NAD(+)</name>
        <dbReference type="ChEBI" id="CHEBI:57540"/>
    </ligand>
</feature>
<feature type="binding site" evidence="1">
    <location>
        <begin position="81"/>
        <end position="82"/>
    </location>
    <ligand>
        <name>NAD(+)</name>
        <dbReference type="ChEBI" id="CHEBI:57540"/>
    </ligand>
</feature>
<feature type="binding site" evidence="1">
    <location>
        <position position="114"/>
    </location>
    <ligand>
        <name>NAD(+)</name>
        <dbReference type="ChEBI" id="CHEBI:57540"/>
    </ligand>
</feature>
<feature type="binding site" evidence="1">
    <location>
        <position position="137"/>
    </location>
    <ligand>
        <name>NAD(+)</name>
        <dbReference type="ChEBI" id="CHEBI:57540"/>
    </ligand>
</feature>
<feature type="binding site" evidence="1">
    <location>
        <position position="174"/>
    </location>
    <ligand>
        <name>NAD(+)</name>
        <dbReference type="ChEBI" id="CHEBI:57540"/>
    </ligand>
</feature>
<feature type="binding site" evidence="1">
    <location>
        <position position="291"/>
    </location>
    <ligand>
        <name>NAD(+)</name>
        <dbReference type="ChEBI" id="CHEBI:57540"/>
    </ligand>
</feature>
<feature type="binding site" evidence="1">
    <location>
        <position position="315"/>
    </location>
    <ligand>
        <name>NAD(+)</name>
        <dbReference type="ChEBI" id="CHEBI:57540"/>
    </ligand>
</feature>
<feature type="binding site" evidence="1">
    <location>
        <position position="409"/>
    </location>
    <ligand>
        <name>Zn(2+)</name>
        <dbReference type="ChEBI" id="CHEBI:29105"/>
    </ligand>
</feature>
<feature type="binding site" evidence="1">
    <location>
        <position position="412"/>
    </location>
    <ligand>
        <name>Zn(2+)</name>
        <dbReference type="ChEBI" id="CHEBI:29105"/>
    </ligand>
</feature>
<feature type="binding site" evidence="1">
    <location>
        <position position="427"/>
    </location>
    <ligand>
        <name>Zn(2+)</name>
        <dbReference type="ChEBI" id="CHEBI:29105"/>
    </ligand>
</feature>
<feature type="binding site" evidence="1">
    <location>
        <position position="433"/>
    </location>
    <ligand>
        <name>Zn(2+)</name>
        <dbReference type="ChEBI" id="CHEBI:29105"/>
    </ligand>
</feature>
<organism>
    <name type="scientific">Actinobacillus succinogenes (strain ATCC 55618 / DSM 22257 / CCUG 43843 / 130Z)</name>
    <dbReference type="NCBI Taxonomy" id="339671"/>
    <lineage>
        <taxon>Bacteria</taxon>
        <taxon>Pseudomonadati</taxon>
        <taxon>Pseudomonadota</taxon>
        <taxon>Gammaproteobacteria</taxon>
        <taxon>Pasteurellales</taxon>
        <taxon>Pasteurellaceae</taxon>
        <taxon>Actinobacillus</taxon>
    </lineage>
</organism>
<protein>
    <recommendedName>
        <fullName evidence="1">DNA ligase</fullName>
        <ecNumber evidence="1">6.5.1.2</ecNumber>
    </recommendedName>
    <alternativeName>
        <fullName evidence="1">Polydeoxyribonucleotide synthase [NAD(+)]</fullName>
    </alternativeName>
</protein>
<evidence type="ECO:0000255" key="1">
    <source>
        <dbReference type="HAMAP-Rule" id="MF_01588"/>
    </source>
</evidence>
<keyword id="KW-0227">DNA damage</keyword>
<keyword id="KW-0234">DNA repair</keyword>
<keyword id="KW-0235">DNA replication</keyword>
<keyword id="KW-0436">Ligase</keyword>
<keyword id="KW-0460">Magnesium</keyword>
<keyword id="KW-0464">Manganese</keyword>
<keyword id="KW-0479">Metal-binding</keyword>
<keyword id="KW-0520">NAD</keyword>
<keyword id="KW-1185">Reference proteome</keyword>
<keyword id="KW-0862">Zinc</keyword>
<name>DNLJ_ACTSZ</name>
<reference key="1">
    <citation type="journal article" date="2010" name="BMC Genomics">
        <title>A genomic perspective on the potential of Actinobacillus succinogenes for industrial succinate production.</title>
        <authorList>
            <person name="McKinlay J.B."/>
            <person name="Laivenieks M."/>
            <person name="Schindler B.D."/>
            <person name="McKinlay A.A."/>
            <person name="Siddaramappa S."/>
            <person name="Challacombe J.F."/>
            <person name="Lowry S.R."/>
            <person name="Clum A."/>
            <person name="Lapidus A.L."/>
            <person name="Burkhart K.B."/>
            <person name="Harkins V."/>
            <person name="Vieille C."/>
        </authorList>
    </citation>
    <scope>NUCLEOTIDE SEQUENCE [LARGE SCALE GENOMIC DNA]</scope>
    <source>
        <strain>ATCC 55618 / DSM 22257 / CCUG 43843 / 130Z</strain>
    </source>
</reference>
<accession>A6VR16</accession>
<comment type="function">
    <text evidence="1">DNA ligase that catalyzes the formation of phosphodiester linkages between 5'-phosphoryl and 3'-hydroxyl groups in double-stranded DNA using NAD as a coenzyme and as the energy source for the reaction. It is essential for DNA replication and repair of damaged DNA.</text>
</comment>
<comment type="catalytic activity">
    <reaction evidence="1">
        <text>NAD(+) + (deoxyribonucleotide)n-3'-hydroxyl + 5'-phospho-(deoxyribonucleotide)m = (deoxyribonucleotide)n+m + AMP + beta-nicotinamide D-nucleotide.</text>
        <dbReference type="EC" id="6.5.1.2"/>
    </reaction>
</comment>
<comment type="cofactor">
    <cofactor evidence="1">
        <name>Mg(2+)</name>
        <dbReference type="ChEBI" id="CHEBI:18420"/>
    </cofactor>
    <cofactor evidence="1">
        <name>Mn(2+)</name>
        <dbReference type="ChEBI" id="CHEBI:29035"/>
    </cofactor>
</comment>
<comment type="similarity">
    <text evidence="1">Belongs to the NAD-dependent DNA ligase family. LigA subfamily.</text>
</comment>
<dbReference type="EC" id="6.5.1.2" evidence="1"/>
<dbReference type="EMBL" id="CP000746">
    <property type="protein sequence ID" value="ABR75413.1"/>
    <property type="molecule type" value="Genomic_DNA"/>
</dbReference>
<dbReference type="RefSeq" id="WP_012073789.1">
    <property type="nucleotide sequence ID" value="NC_009655.1"/>
</dbReference>
<dbReference type="SMR" id="A6VR16"/>
<dbReference type="STRING" id="339671.Asuc_2067"/>
<dbReference type="KEGG" id="asu:Asuc_2067"/>
<dbReference type="eggNOG" id="COG0272">
    <property type="taxonomic scope" value="Bacteria"/>
</dbReference>
<dbReference type="HOGENOM" id="CLU_007764_2_1_6"/>
<dbReference type="OrthoDB" id="9759736at2"/>
<dbReference type="Proteomes" id="UP000001114">
    <property type="component" value="Chromosome"/>
</dbReference>
<dbReference type="GO" id="GO:0005829">
    <property type="term" value="C:cytosol"/>
    <property type="evidence" value="ECO:0007669"/>
    <property type="project" value="TreeGrafter"/>
</dbReference>
<dbReference type="GO" id="GO:0003677">
    <property type="term" value="F:DNA binding"/>
    <property type="evidence" value="ECO:0007669"/>
    <property type="project" value="InterPro"/>
</dbReference>
<dbReference type="GO" id="GO:0003911">
    <property type="term" value="F:DNA ligase (NAD+) activity"/>
    <property type="evidence" value="ECO:0007669"/>
    <property type="project" value="UniProtKB-UniRule"/>
</dbReference>
<dbReference type="GO" id="GO:0046872">
    <property type="term" value="F:metal ion binding"/>
    <property type="evidence" value="ECO:0007669"/>
    <property type="project" value="UniProtKB-KW"/>
</dbReference>
<dbReference type="GO" id="GO:0006281">
    <property type="term" value="P:DNA repair"/>
    <property type="evidence" value="ECO:0007669"/>
    <property type="project" value="UniProtKB-KW"/>
</dbReference>
<dbReference type="GO" id="GO:0006260">
    <property type="term" value="P:DNA replication"/>
    <property type="evidence" value="ECO:0007669"/>
    <property type="project" value="UniProtKB-KW"/>
</dbReference>
<dbReference type="CDD" id="cd17748">
    <property type="entry name" value="BRCT_DNA_ligase_like"/>
    <property type="match status" value="1"/>
</dbReference>
<dbReference type="CDD" id="cd00114">
    <property type="entry name" value="LIGANc"/>
    <property type="match status" value="1"/>
</dbReference>
<dbReference type="FunFam" id="1.10.150.20:FF:000006">
    <property type="entry name" value="DNA ligase"/>
    <property type="match status" value="1"/>
</dbReference>
<dbReference type="FunFam" id="1.10.150.20:FF:000007">
    <property type="entry name" value="DNA ligase"/>
    <property type="match status" value="1"/>
</dbReference>
<dbReference type="FunFam" id="1.10.287.610:FF:000002">
    <property type="entry name" value="DNA ligase"/>
    <property type="match status" value="1"/>
</dbReference>
<dbReference type="FunFam" id="2.40.50.140:FF:000012">
    <property type="entry name" value="DNA ligase"/>
    <property type="match status" value="1"/>
</dbReference>
<dbReference type="FunFam" id="3.30.470.30:FF:000001">
    <property type="entry name" value="DNA ligase"/>
    <property type="match status" value="1"/>
</dbReference>
<dbReference type="Gene3D" id="6.20.10.30">
    <property type="match status" value="1"/>
</dbReference>
<dbReference type="Gene3D" id="1.10.150.20">
    <property type="entry name" value="5' to 3' exonuclease, C-terminal subdomain"/>
    <property type="match status" value="2"/>
</dbReference>
<dbReference type="Gene3D" id="3.40.50.10190">
    <property type="entry name" value="BRCT domain"/>
    <property type="match status" value="1"/>
</dbReference>
<dbReference type="Gene3D" id="3.30.470.30">
    <property type="entry name" value="DNA ligase/mRNA capping enzyme"/>
    <property type="match status" value="1"/>
</dbReference>
<dbReference type="Gene3D" id="1.10.287.610">
    <property type="entry name" value="Helix hairpin bin"/>
    <property type="match status" value="1"/>
</dbReference>
<dbReference type="Gene3D" id="2.40.50.140">
    <property type="entry name" value="Nucleic acid-binding proteins"/>
    <property type="match status" value="1"/>
</dbReference>
<dbReference type="HAMAP" id="MF_01588">
    <property type="entry name" value="DNA_ligase_A"/>
    <property type="match status" value="1"/>
</dbReference>
<dbReference type="InterPro" id="IPR001357">
    <property type="entry name" value="BRCT_dom"/>
</dbReference>
<dbReference type="InterPro" id="IPR036420">
    <property type="entry name" value="BRCT_dom_sf"/>
</dbReference>
<dbReference type="InterPro" id="IPR041663">
    <property type="entry name" value="DisA/LigA_HHH"/>
</dbReference>
<dbReference type="InterPro" id="IPR001679">
    <property type="entry name" value="DNA_ligase"/>
</dbReference>
<dbReference type="InterPro" id="IPR018239">
    <property type="entry name" value="DNA_ligase_AS"/>
</dbReference>
<dbReference type="InterPro" id="IPR033136">
    <property type="entry name" value="DNA_ligase_CS"/>
</dbReference>
<dbReference type="InterPro" id="IPR013839">
    <property type="entry name" value="DNAligase_adenylation"/>
</dbReference>
<dbReference type="InterPro" id="IPR013840">
    <property type="entry name" value="DNAligase_N"/>
</dbReference>
<dbReference type="InterPro" id="IPR003583">
    <property type="entry name" value="Hlx-hairpin-Hlx_DNA-bd_motif"/>
</dbReference>
<dbReference type="InterPro" id="IPR012340">
    <property type="entry name" value="NA-bd_OB-fold"/>
</dbReference>
<dbReference type="InterPro" id="IPR004150">
    <property type="entry name" value="NAD_DNA_ligase_OB"/>
</dbReference>
<dbReference type="InterPro" id="IPR010994">
    <property type="entry name" value="RuvA_2-like"/>
</dbReference>
<dbReference type="InterPro" id="IPR004149">
    <property type="entry name" value="Znf_DNAligase_C4"/>
</dbReference>
<dbReference type="NCBIfam" id="TIGR00575">
    <property type="entry name" value="dnlj"/>
    <property type="match status" value="1"/>
</dbReference>
<dbReference type="NCBIfam" id="NF005932">
    <property type="entry name" value="PRK07956.1"/>
    <property type="match status" value="1"/>
</dbReference>
<dbReference type="PANTHER" id="PTHR23389">
    <property type="entry name" value="CHROMOSOME TRANSMISSION FIDELITY FACTOR 18"/>
    <property type="match status" value="1"/>
</dbReference>
<dbReference type="PANTHER" id="PTHR23389:SF9">
    <property type="entry name" value="DNA LIGASE"/>
    <property type="match status" value="1"/>
</dbReference>
<dbReference type="Pfam" id="PF00533">
    <property type="entry name" value="BRCT"/>
    <property type="match status" value="1"/>
</dbReference>
<dbReference type="Pfam" id="PF01653">
    <property type="entry name" value="DNA_ligase_aden"/>
    <property type="match status" value="1"/>
</dbReference>
<dbReference type="Pfam" id="PF03120">
    <property type="entry name" value="DNA_ligase_OB"/>
    <property type="match status" value="1"/>
</dbReference>
<dbReference type="Pfam" id="PF03119">
    <property type="entry name" value="DNA_ligase_ZBD"/>
    <property type="match status" value="1"/>
</dbReference>
<dbReference type="Pfam" id="PF12826">
    <property type="entry name" value="HHH_2"/>
    <property type="match status" value="1"/>
</dbReference>
<dbReference type="Pfam" id="PF14520">
    <property type="entry name" value="HHH_5"/>
    <property type="match status" value="1"/>
</dbReference>
<dbReference type="Pfam" id="PF22745">
    <property type="entry name" value="Nlig-Ia"/>
    <property type="match status" value="1"/>
</dbReference>
<dbReference type="PIRSF" id="PIRSF001604">
    <property type="entry name" value="LigA"/>
    <property type="match status" value="1"/>
</dbReference>
<dbReference type="SMART" id="SM00292">
    <property type="entry name" value="BRCT"/>
    <property type="match status" value="1"/>
</dbReference>
<dbReference type="SMART" id="SM00278">
    <property type="entry name" value="HhH1"/>
    <property type="match status" value="4"/>
</dbReference>
<dbReference type="SMART" id="SM00532">
    <property type="entry name" value="LIGANc"/>
    <property type="match status" value="1"/>
</dbReference>
<dbReference type="SUPFAM" id="SSF52113">
    <property type="entry name" value="BRCT domain"/>
    <property type="match status" value="1"/>
</dbReference>
<dbReference type="SUPFAM" id="SSF56091">
    <property type="entry name" value="DNA ligase/mRNA capping enzyme, catalytic domain"/>
    <property type="match status" value="1"/>
</dbReference>
<dbReference type="SUPFAM" id="SSF50249">
    <property type="entry name" value="Nucleic acid-binding proteins"/>
    <property type="match status" value="1"/>
</dbReference>
<dbReference type="SUPFAM" id="SSF47781">
    <property type="entry name" value="RuvA domain 2-like"/>
    <property type="match status" value="1"/>
</dbReference>
<dbReference type="PROSITE" id="PS50172">
    <property type="entry name" value="BRCT"/>
    <property type="match status" value="1"/>
</dbReference>
<dbReference type="PROSITE" id="PS01055">
    <property type="entry name" value="DNA_LIGASE_N1"/>
    <property type="match status" value="1"/>
</dbReference>
<dbReference type="PROSITE" id="PS01056">
    <property type="entry name" value="DNA_LIGASE_N2"/>
    <property type="match status" value="1"/>
</dbReference>